<reference key="1">
    <citation type="journal article" date="2002" name="Nature">
        <title>The genome sequence of Schizosaccharomyces pombe.</title>
        <authorList>
            <person name="Wood V."/>
            <person name="Gwilliam R."/>
            <person name="Rajandream M.A."/>
            <person name="Lyne M.H."/>
            <person name="Lyne R."/>
            <person name="Stewart A."/>
            <person name="Sgouros J.G."/>
            <person name="Peat N."/>
            <person name="Hayles J."/>
            <person name="Baker S.G."/>
            <person name="Basham D."/>
            <person name="Bowman S."/>
            <person name="Brooks K."/>
            <person name="Brown D."/>
            <person name="Brown S."/>
            <person name="Chillingworth T."/>
            <person name="Churcher C.M."/>
            <person name="Collins M."/>
            <person name="Connor R."/>
            <person name="Cronin A."/>
            <person name="Davis P."/>
            <person name="Feltwell T."/>
            <person name="Fraser A."/>
            <person name="Gentles S."/>
            <person name="Goble A."/>
            <person name="Hamlin N."/>
            <person name="Harris D.E."/>
            <person name="Hidalgo J."/>
            <person name="Hodgson G."/>
            <person name="Holroyd S."/>
            <person name="Hornsby T."/>
            <person name="Howarth S."/>
            <person name="Huckle E.J."/>
            <person name="Hunt S."/>
            <person name="Jagels K."/>
            <person name="James K.D."/>
            <person name="Jones L."/>
            <person name="Jones M."/>
            <person name="Leather S."/>
            <person name="McDonald S."/>
            <person name="McLean J."/>
            <person name="Mooney P."/>
            <person name="Moule S."/>
            <person name="Mungall K.L."/>
            <person name="Murphy L.D."/>
            <person name="Niblett D."/>
            <person name="Odell C."/>
            <person name="Oliver K."/>
            <person name="O'Neil S."/>
            <person name="Pearson D."/>
            <person name="Quail M.A."/>
            <person name="Rabbinowitsch E."/>
            <person name="Rutherford K.M."/>
            <person name="Rutter S."/>
            <person name="Saunders D."/>
            <person name="Seeger K."/>
            <person name="Sharp S."/>
            <person name="Skelton J."/>
            <person name="Simmonds M.N."/>
            <person name="Squares R."/>
            <person name="Squares S."/>
            <person name="Stevens K."/>
            <person name="Taylor K."/>
            <person name="Taylor R.G."/>
            <person name="Tivey A."/>
            <person name="Walsh S.V."/>
            <person name="Warren T."/>
            <person name="Whitehead S."/>
            <person name="Woodward J.R."/>
            <person name="Volckaert G."/>
            <person name="Aert R."/>
            <person name="Robben J."/>
            <person name="Grymonprez B."/>
            <person name="Weltjens I."/>
            <person name="Vanstreels E."/>
            <person name="Rieger M."/>
            <person name="Schaefer M."/>
            <person name="Mueller-Auer S."/>
            <person name="Gabel C."/>
            <person name="Fuchs M."/>
            <person name="Duesterhoeft A."/>
            <person name="Fritzc C."/>
            <person name="Holzer E."/>
            <person name="Moestl D."/>
            <person name="Hilbert H."/>
            <person name="Borzym K."/>
            <person name="Langer I."/>
            <person name="Beck A."/>
            <person name="Lehrach H."/>
            <person name="Reinhardt R."/>
            <person name="Pohl T.M."/>
            <person name="Eger P."/>
            <person name="Zimmermann W."/>
            <person name="Wedler H."/>
            <person name="Wambutt R."/>
            <person name="Purnelle B."/>
            <person name="Goffeau A."/>
            <person name="Cadieu E."/>
            <person name="Dreano S."/>
            <person name="Gloux S."/>
            <person name="Lelaure V."/>
            <person name="Mottier S."/>
            <person name="Galibert F."/>
            <person name="Aves S.J."/>
            <person name="Xiang Z."/>
            <person name="Hunt C."/>
            <person name="Moore K."/>
            <person name="Hurst S.M."/>
            <person name="Lucas M."/>
            <person name="Rochet M."/>
            <person name="Gaillardin C."/>
            <person name="Tallada V.A."/>
            <person name="Garzon A."/>
            <person name="Thode G."/>
            <person name="Daga R.R."/>
            <person name="Cruzado L."/>
            <person name="Jimenez J."/>
            <person name="Sanchez M."/>
            <person name="del Rey F."/>
            <person name="Benito J."/>
            <person name="Dominguez A."/>
            <person name="Revuelta J.L."/>
            <person name="Moreno S."/>
            <person name="Armstrong J."/>
            <person name="Forsburg S.L."/>
            <person name="Cerutti L."/>
            <person name="Lowe T."/>
            <person name="McCombie W.R."/>
            <person name="Paulsen I."/>
            <person name="Potashkin J."/>
            <person name="Shpakovski G.V."/>
            <person name="Ussery D."/>
            <person name="Barrell B.G."/>
            <person name="Nurse P."/>
        </authorList>
    </citation>
    <scope>NUCLEOTIDE SEQUENCE [LARGE SCALE GENOMIC DNA]</scope>
    <source>
        <strain>972 / ATCC 24843</strain>
    </source>
</reference>
<feature type="transit peptide" description="Mitochondrion" evidence="2">
    <location>
        <begin position="1"/>
        <end status="unknown"/>
    </location>
</feature>
<feature type="chain" id="PRO_0000002534" description="Protein atp11, mitochondrial">
    <location>
        <begin status="unknown"/>
        <end position="286"/>
    </location>
</feature>
<evidence type="ECO:0000250" key="1"/>
<evidence type="ECO:0000255" key="2"/>
<evidence type="ECO:0000305" key="3"/>
<accession>P87127</accession>
<organism>
    <name type="scientific">Schizosaccharomyces pombe (strain 972 / ATCC 24843)</name>
    <name type="common">Fission yeast</name>
    <dbReference type="NCBI Taxonomy" id="284812"/>
    <lineage>
        <taxon>Eukaryota</taxon>
        <taxon>Fungi</taxon>
        <taxon>Dikarya</taxon>
        <taxon>Ascomycota</taxon>
        <taxon>Taphrinomycotina</taxon>
        <taxon>Schizosaccharomycetes</taxon>
        <taxon>Schizosaccharomycetales</taxon>
        <taxon>Schizosaccharomycetaceae</taxon>
        <taxon>Schizosaccharomyces</taxon>
    </lineage>
</organism>
<proteinExistence type="inferred from homology"/>
<sequence>MLPIWKLPVNHLLCHSFKSIPRTSAYAVRFAHHTSNNDDLEVKKNTVYERYERKLKSKAEELHMPVTNLLKKGQTKEREHVIPKKSFSAKKSLVGQNAKKSDLSGLNRYIDVEKIKELPTSTIEKLWRARNIGDDILSACIPKEIYEKMLSRARMYPYFVLPLPRGDKGIESHFLQWNFPNKNEAHLLVTSLLEYKLKGSYAAPHTIMLHFADLLNLKGITLMRCQFEPKKLSANDVQLLVLAIQKFYNASENTPLGKERLALLAAFSKGADFDLHKVATHMDMLE</sequence>
<name>ATP11_SCHPO</name>
<protein>
    <recommendedName>
        <fullName>Protein atp11, mitochondrial</fullName>
    </recommendedName>
</protein>
<gene>
    <name type="primary">atp11</name>
    <name type="ORF">SPAC3A12.12</name>
</gene>
<comment type="function">
    <text evidence="1">Essential for the assembly of the mitochondrial F1-F0 complex. May interact with the alpha and/or beta subunits of F1-ATPase (By similarity).</text>
</comment>
<comment type="subcellular location">
    <subcellularLocation>
        <location evidence="1">Mitochondrion</location>
    </subcellularLocation>
</comment>
<comment type="similarity">
    <text evidence="3">Belongs to the ATP11 family.</text>
</comment>
<keyword id="KW-0496">Mitochondrion</keyword>
<keyword id="KW-1185">Reference proteome</keyword>
<keyword id="KW-0809">Transit peptide</keyword>
<dbReference type="EMBL" id="CU329670">
    <property type="protein sequence ID" value="CAB08757.1"/>
    <property type="molecule type" value="Genomic_DNA"/>
</dbReference>
<dbReference type="PIR" id="T38680">
    <property type="entry name" value="T38680"/>
</dbReference>
<dbReference type="RefSeq" id="NP_593338.1">
    <property type="nucleotide sequence ID" value="NM_001018770.2"/>
</dbReference>
<dbReference type="SMR" id="P87127"/>
<dbReference type="BioGRID" id="278208">
    <property type="interactions" value="315"/>
</dbReference>
<dbReference type="FunCoup" id="P87127">
    <property type="interactions" value="280"/>
</dbReference>
<dbReference type="IntAct" id="P87127">
    <property type="interactions" value="5"/>
</dbReference>
<dbReference type="STRING" id="284812.P87127"/>
<dbReference type="PaxDb" id="4896-SPAC3A12.12.1"/>
<dbReference type="EnsemblFungi" id="SPAC3A12.12.1">
    <property type="protein sequence ID" value="SPAC3A12.12.1:pep"/>
    <property type="gene ID" value="SPAC3A12.12"/>
</dbReference>
<dbReference type="GeneID" id="2541713"/>
<dbReference type="KEGG" id="spo:2541713"/>
<dbReference type="PomBase" id="SPAC3A12.12">
    <property type="gene designation" value="atp11"/>
</dbReference>
<dbReference type="VEuPathDB" id="FungiDB:SPAC3A12.12"/>
<dbReference type="eggNOG" id="KOG3281">
    <property type="taxonomic scope" value="Eukaryota"/>
</dbReference>
<dbReference type="HOGENOM" id="CLU_054226_2_0_1"/>
<dbReference type="InParanoid" id="P87127"/>
<dbReference type="OMA" id="MFYYKTD"/>
<dbReference type="PhylomeDB" id="P87127"/>
<dbReference type="PRO" id="PR:P87127"/>
<dbReference type="Proteomes" id="UP000002485">
    <property type="component" value="Chromosome I"/>
</dbReference>
<dbReference type="GO" id="GO:0005759">
    <property type="term" value="C:mitochondrial matrix"/>
    <property type="evidence" value="ECO:0000266"/>
    <property type="project" value="PomBase"/>
</dbReference>
<dbReference type="GO" id="GO:0005739">
    <property type="term" value="C:mitochondrion"/>
    <property type="evidence" value="ECO:0007005"/>
    <property type="project" value="PomBase"/>
</dbReference>
<dbReference type="GO" id="GO:0044183">
    <property type="term" value="F:protein folding chaperone"/>
    <property type="evidence" value="ECO:0000303"/>
    <property type="project" value="PomBase"/>
</dbReference>
<dbReference type="GO" id="GO:0033615">
    <property type="term" value="P:mitochondrial proton-transporting ATP synthase complex assembly"/>
    <property type="evidence" value="ECO:0000318"/>
    <property type="project" value="GO_Central"/>
</dbReference>
<dbReference type="InterPro" id="IPR010591">
    <property type="entry name" value="ATP11"/>
</dbReference>
<dbReference type="PANTHER" id="PTHR13126:SF0">
    <property type="entry name" value="ATP SYNTHASE MITOCHONDRIAL F1 COMPLEX ASSEMBLY FACTOR 1"/>
    <property type="match status" value="1"/>
</dbReference>
<dbReference type="PANTHER" id="PTHR13126">
    <property type="entry name" value="CHAPERONE ATP11"/>
    <property type="match status" value="1"/>
</dbReference>
<dbReference type="Pfam" id="PF06644">
    <property type="entry name" value="ATP11"/>
    <property type="match status" value="1"/>
</dbReference>